<keyword id="KW-0007">Acetylation</keyword>
<keyword id="KW-0963">Cytoplasm</keyword>
<keyword id="KW-0256">Endoplasmic reticulum</keyword>
<keyword id="KW-0325">Glycoprotein</keyword>
<keyword id="KW-0378">Hydrolase</keyword>
<keyword id="KW-0449">Lipoprotein</keyword>
<keyword id="KW-0472">Membrane</keyword>
<keyword id="KW-0597">Phosphoprotein</keyword>
<keyword id="KW-0636">Prenylation</keyword>
<keyword id="KW-0645">Protease</keyword>
<keyword id="KW-1185">Reference proteome</keyword>
<keyword id="KW-0788">Thiol protease</keyword>
<keyword id="KW-0833">Ubl conjugation pathway</keyword>
<gene>
    <name type="primary">UCHL1</name>
</gene>
<comment type="function">
    <text evidence="2 4">Ubiquitin-protein hydrolase involved both in the processing of ubiquitin precursors and of ubiquitinated proteins. This enzyme is a thiol protease that recognizes and hydrolyzes a peptide bond at the C-terminal glycine of ubiquitin (By similarity). Also binds to free monoubiquitin and may prevent its degradation in lysosomes (By similarity). The homodimer may have ATP-independent ubiquitin ligase activity (By similarity).</text>
</comment>
<comment type="catalytic activity">
    <reaction evidence="2">
        <text>Thiol-dependent hydrolysis of ester, thioester, amide, peptide and isopeptide bonds formed by the C-terminal Gly of ubiquitin (a 76-residue protein attached to proteins as an intracellular targeting signal).</text>
        <dbReference type="EC" id="3.4.19.12"/>
    </reaction>
</comment>
<comment type="subunit">
    <text evidence="1">Monomer. Homodimer. Interacts with COPS5 and SNCA (By similarity).</text>
</comment>
<comment type="subcellular location">
    <subcellularLocation>
        <location evidence="1">Cytoplasm</location>
    </subcellularLocation>
    <subcellularLocation>
        <location evidence="1">Endoplasmic reticulum membrane</location>
        <topology evidence="1">Lipid-anchor</topology>
    </subcellularLocation>
</comment>
<comment type="PTM">
    <text evidence="1">O-glycosylated.</text>
</comment>
<comment type="miscellaneous">
    <text evidence="1">In contrast to UCHL3, does not hydrolyze a peptide bond at the C-terminal glycine of NEDD8.</text>
</comment>
<comment type="similarity">
    <text evidence="7">Belongs to the peptidase C12 family.</text>
</comment>
<comment type="caution">
    <text evidence="2">The homodimer may have ATP-independent ubiquitin ligase activity. However, in another study, UCHL1 was shown to lack ubiquitin ligase activity.</text>
</comment>
<evidence type="ECO:0000250" key="1"/>
<evidence type="ECO:0000250" key="2">
    <source>
        <dbReference type="UniProtKB" id="P09936"/>
    </source>
</evidence>
<evidence type="ECO:0000250" key="3">
    <source>
        <dbReference type="UniProtKB" id="Q00981"/>
    </source>
</evidence>
<evidence type="ECO:0000250" key="4">
    <source>
        <dbReference type="UniProtKB" id="Q9R0P9"/>
    </source>
</evidence>
<evidence type="ECO:0000255" key="5">
    <source>
        <dbReference type="PROSITE-ProRule" id="PRU01393"/>
    </source>
</evidence>
<evidence type="ECO:0000255" key="6">
    <source>
        <dbReference type="PROSITE-ProRule" id="PRU10091"/>
    </source>
</evidence>
<evidence type="ECO:0000305" key="7"/>
<sequence length="223" mass="24888">MQLKPMEINPEMLNKVLARLGVAGQWRFVDVLGLEEETLGSVPAPACALLLLFPLTAQHENFRKKQIEELKGQEVSPKVYFMKQTIGNSCGTIGLIHAVANNQDKLEFEDGSVLKQFLSETEKLSPEDRAKCFEKNEAIQAAHDAVAQEGQCRVDDKVNFHFILFNNVDGHLYELDGRMPFPVNHGASSEDLLLQDAAKVCREFTEREQGEVRFSAVALCKAA</sequence>
<accession>Q9GM50</accession>
<accession>O62662</accession>
<proteinExistence type="evidence at transcript level"/>
<feature type="chain" id="PRO_0000211054" description="Ubiquitin carboxyl-terminal hydrolase isozyme L1">
    <location>
        <begin position="1"/>
        <end position="220"/>
    </location>
</feature>
<feature type="propeptide" id="PRO_0000414310" description="Removed in mature form" evidence="1">
    <location>
        <begin position="221"/>
        <end position="223"/>
    </location>
</feature>
<feature type="domain" description="UCH catalytic" evidence="5">
    <location>
        <begin position="2"/>
        <end position="221"/>
    </location>
</feature>
<feature type="region of interest" description="Interaction with ubiquitin" evidence="2">
    <location>
        <begin position="5"/>
        <end position="10"/>
    </location>
</feature>
<feature type="region of interest" description="Interaction with ubiquitin" evidence="2">
    <location>
        <begin position="211"/>
        <end position="216"/>
    </location>
</feature>
<feature type="active site" description="Nucleophile" evidence="5 6">
    <location>
        <position position="90"/>
    </location>
</feature>
<feature type="active site" description="Proton donor" evidence="5">
    <location>
        <position position="161"/>
    </location>
</feature>
<feature type="site" description="Transition state stabilizer" evidence="5">
    <location>
        <position position="84"/>
    </location>
</feature>
<feature type="site" description="Important for enzyme activity" evidence="5">
    <location>
        <position position="176"/>
    </location>
</feature>
<feature type="modified residue" description="N-acetylmethionine" evidence="2">
    <location>
        <position position="1"/>
    </location>
</feature>
<feature type="modified residue" description="Phosphoserine" evidence="3">
    <location>
        <position position="125"/>
    </location>
</feature>
<feature type="lipid moiety-binding region" description="S-farnesyl cysteine" evidence="2">
    <location>
        <position position="220"/>
    </location>
</feature>
<feature type="sequence conflict" description="In Ref. 1; BAB13757." evidence="7" ref="1">
    <original>A</original>
    <variation>T</variation>
    <location>
        <position position="187"/>
    </location>
</feature>
<name>UCHL1_HORSE</name>
<dbReference type="EC" id="3.4.19.12" evidence="2"/>
<dbReference type="EMBL" id="AB049188">
    <property type="protein sequence ID" value="BAB13757.1"/>
    <property type="molecule type" value="mRNA"/>
</dbReference>
<dbReference type="EMBL" id="AB013344">
    <property type="protein sequence ID" value="BAA28214.1"/>
    <property type="molecule type" value="mRNA"/>
</dbReference>
<dbReference type="RefSeq" id="NP_001075289.1">
    <property type="nucleotide sequence ID" value="NM_001081820.1"/>
</dbReference>
<dbReference type="BMRB" id="Q9GM50"/>
<dbReference type="SMR" id="Q9GM50"/>
<dbReference type="FunCoup" id="Q9GM50">
    <property type="interactions" value="1074"/>
</dbReference>
<dbReference type="STRING" id="9796.ENSECAP00000024797"/>
<dbReference type="MEROPS" id="C12.001"/>
<dbReference type="PaxDb" id="9796-ENSECAP00000024797"/>
<dbReference type="PeptideAtlas" id="Q9GM50"/>
<dbReference type="GeneID" id="100033838"/>
<dbReference type="KEGG" id="ecb:100033838"/>
<dbReference type="CTD" id="7345"/>
<dbReference type="InParanoid" id="Q9GM50"/>
<dbReference type="OrthoDB" id="427186at2759"/>
<dbReference type="Proteomes" id="UP000002281">
    <property type="component" value="Unplaced"/>
</dbReference>
<dbReference type="GO" id="GO:0005737">
    <property type="term" value="C:cytoplasm"/>
    <property type="evidence" value="ECO:0000318"/>
    <property type="project" value="GO_Central"/>
</dbReference>
<dbReference type="GO" id="GO:0005789">
    <property type="term" value="C:endoplasmic reticulum membrane"/>
    <property type="evidence" value="ECO:0007669"/>
    <property type="project" value="UniProtKB-SubCell"/>
</dbReference>
<dbReference type="GO" id="GO:0004843">
    <property type="term" value="F:cysteine-type deubiquitinase activity"/>
    <property type="evidence" value="ECO:0000318"/>
    <property type="project" value="GO_Central"/>
</dbReference>
<dbReference type="GO" id="GO:0030163">
    <property type="term" value="P:protein catabolic process"/>
    <property type="evidence" value="ECO:0000318"/>
    <property type="project" value="GO_Central"/>
</dbReference>
<dbReference type="GO" id="GO:0006511">
    <property type="term" value="P:ubiquitin-dependent protein catabolic process"/>
    <property type="evidence" value="ECO:0007669"/>
    <property type="project" value="InterPro"/>
</dbReference>
<dbReference type="CDD" id="cd09616">
    <property type="entry name" value="Peptidase_C12_UCH_L1_L3"/>
    <property type="match status" value="1"/>
</dbReference>
<dbReference type="FunFam" id="3.40.532.10:FF:000004">
    <property type="entry name" value="Ubiquitin carboxyl-terminal hydrolase"/>
    <property type="match status" value="1"/>
</dbReference>
<dbReference type="Gene3D" id="3.40.532.10">
    <property type="entry name" value="Peptidase C12, ubiquitin carboxyl-terminal hydrolase"/>
    <property type="match status" value="1"/>
</dbReference>
<dbReference type="InterPro" id="IPR038765">
    <property type="entry name" value="Papain-like_cys_pep_sf"/>
</dbReference>
<dbReference type="InterPro" id="IPR001578">
    <property type="entry name" value="Peptidase_C12_UCH"/>
</dbReference>
<dbReference type="InterPro" id="IPR036959">
    <property type="entry name" value="Peptidase_C12_UCH_sf"/>
</dbReference>
<dbReference type="InterPro" id="IPR057254">
    <property type="entry name" value="UCH_AS"/>
</dbReference>
<dbReference type="PANTHER" id="PTHR10589">
    <property type="entry name" value="UBIQUITIN CARBOXYL-TERMINAL HYDROLASE"/>
    <property type="match status" value="1"/>
</dbReference>
<dbReference type="PANTHER" id="PTHR10589:SF19">
    <property type="entry name" value="UBIQUITIN CARBOXYL-TERMINAL HYDROLASE ISOZYME L1"/>
    <property type="match status" value="1"/>
</dbReference>
<dbReference type="Pfam" id="PF01088">
    <property type="entry name" value="Peptidase_C12"/>
    <property type="match status" value="1"/>
</dbReference>
<dbReference type="PRINTS" id="PR00707">
    <property type="entry name" value="UBCTHYDRLASE"/>
</dbReference>
<dbReference type="SUPFAM" id="SSF54001">
    <property type="entry name" value="Cysteine proteinases"/>
    <property type="match status" value="1"/>
</dbReference>
<dbReference type="PROSITE" id="PS00140">
    <property type="entry name" value="UCH_1"/>
    <property type="match status" value="1"/>
</dbReference>
<dbReference type="PROSITE" id="PS52048">
    <property type="entry name" value="UCH_DOMAIN"/>
    <property type="match status" value="1"/>
</dbReference>
<organism>
    <name type="scientific">Equus caballus</name>
    <name type="common">Horse</name>
    <dbReference type="NCBI Taxonomy" id="9796"/>
    <lineage>
        <taxon>Eukaryota</taxon>
        <taxon>Metazoa</taxon>
        <taxon>Chordata</taxon>
        <taxon>Craniata</taxon>
        <taxon>Vertebrata</taxon>
        <taxon>Euteleostomi</taxon>
        <taxon>Mammalia</taxon>
        <taxon>Eutheria</taxon>
        <taxon>Laurasiatheria</taxon>
        <taxon>Perissodactyla</taxon>
        <taxon>Equidae</taxon>
        <taxon>Equus</taxon>
    </lineage>
</organism>
<protein>
    <recommendedName>
        <fullName>Ubiquitin carboxyl-terminal hydrolase isozyme L1</fullName>
        <shortName>UCH-L1</shortName>
        <ecNumber evidence="2">3.4.19.12</ecNumber>
    </recommendedName>
    <alternativeName>
        <fullName>Neuron cytoplasmic protein 9.5</fullName>
    </alternativeName>
    <alternativeName>
        <fullName>PGP 9.5</fullName>
        <shortName>PGP9.5</shortName>
    </alternativeName>
    <alternativeName>
        <fullName>Ubiquitin thioesterase L1</fullName>
    </alternativeName>
</protein>
<reference key="1">
    <citation type="submission" date="2000-09" db="EMBL/GenBank/DDBJ databases">
        <title>cDNA cloning of equine ubiquitin C-terminal hydrolase (PGP9.5).</title>
        <authorList>
            <person name="Sato F."/>
            <person name="Harigai N."/>
            <person name="Iwanaga T."/>
            <person name="Hasegawa T."/>
            <person name="Ishida N."/>
        </authorList>
    </citation>
    <scope>NUCLEOTIDE SEQUENCE [MRNA]</scope>
</reference>
<reference key="2">
    <citation type="submission" date="1998-04" db="EMBL/GenBank/DDBJ databases">
        <authorList>
            <person name="Yanase H."/>
            <person name="Kitamura H."/>
            <person name="Iwanaga T."/>
            <person name="Kanehira K."/>
            <person name="Okita K."/>
        </authorList>
    </citation>
    <scope>NUCLEOTIDE SEQUENCE [MRNA] OF 50-188</scope>
    <source>
        <tissue>Brain</tissue>
    </source>
</reference>